<keyword id="KW-0227">DNA damage</keyword>
<keyword id="KW-0233">DNA recombination</keyword>
<keyword id="KW-0234">DNA repair</keyword>
<keyword id="KW-0479">Metal-binding</keyword>
<keyword id="KW-0862">Zinc</keyword>
<keyword id="KW-0863">Zinc-finger</keyword>
<proteinExistence type="inferred from homology"/>
<comment type="function">
    <text evidence="1">May play a role in DNA repair. It seems to be involved in an RecBC-independent recombinational process of DNA repair. It may act with RecF and RecO.</text>
</comment>
<comment type="similarity">
    <text evidence="1">Belongs to the RecR family.</text>
</comment>
<evidence type="ECO:0000255" key="1">
    <source>
        <dbReference type="HAMAP-Rule" id="MF_00017"/>
    </source>
</evidence>
<reference key="1">
    <citation type="journal article" date="2011" name="Appl. Environ. Microbiol.">
        <title>Genomic potential of Marinobacter aquaeolei, a biogeochemical 'opportunitroph'.</title>
        <authorList>
            <person name="Singer E."/>
            <person name="Webb E.A."/>
            <person name="Nelson W.C."/>
            <person name="Heidelberg J.F."/>
            <person name="Ivanova N."/>
            <person name="Pati A."/>
            <person name="Edwards K.J."/>
        </authorList>
    </citation>
    <scope>NUCLEOTIDE SEQUENCE [LARGE SCALE GENOMIC DNA]</scope>
    <source>
        <strain>ATCC 700491 / DSM 11845 / VT8</strain>
    </source>
</reference>
<accession>A1U126</accession>
<sequence length="200" mass="21803">MAFSPLVDELVESLRCLPGVGQKTAQRMAFHLLERGRSGGTRLAAALNHAMDGVRRCDSCQNFSDTEICQICEKPERRNGTLCVVESPSDLLAIEQAGDYKGSYFVLMGHLSPIDGVGPEEIGIERLLDRVRREGVTELILATNPTVEGEATAHYIADRLDGQNILITRLAHGIPVGGELGYVDGFTLTHAFRGRKPLSE</sequence>
<protein>
    <recommendedName>
        <fullName evidence="1">Recombination protein RecR</fullName>
    </recommendedName>
</protein>
<gene>
    <name evidence="1" type="primary">recR</name>
    <name type="ordered locus">Maqu_1611</name>
</gene>
<organism>
    <name type="scientific">Marinobacter nauticus (strain ATCC 700491 / DSM 11845 / VT8)</name>
    <name type="common">Marinobacter aquaeolei</name>
    <dbReference type="NCBI Taxonomy" id="351348"/>
    <lineage>
        <taxon>Bacteria</taxon>
        <taxon>Pseudomonadati</taxon>
        <taxon>Pseudomonadota</taxon>
        <taxon>Gammaproteobacteria</taxon>
        <taxon>Pseudomonadales</taxon>
        <taxon>Marinobacteraceae</taxon>
        <taxon>Marinobacter</taxon>
    </lineage>
</organism>
<dbReference type="EMBL" id="CP000514">
    <property type="protein sequence ID" value="ABM18695.1"/>
    <property type="molecule type" value="Genomic_DNA"/>
</dbReference>
<dbReference type="RefSeq" id="WP_011785096.1">
    <property type="nucleotide sequence ID" value="NC_008740.1"/>
</dbReference>
<dbReference type="SMR" id="A1U126"/>
<dbReference type="STRING" id="351348.Maqu_1611"/>
<dbReference type="GeneID" id="31821136"/>
<dbReference type="KEGG" id="maq:Maqu_1611"/>
<dbReference type="eggNOG" id="COG0353">
    <property type="taxonomic scope" value="Bacteria"/>
</dbReference>
<dbReference type="HOGENOM" id="CLU_060739_1_2_6"/>
<dbReference type="OrthoDB" id="9802672at2"/>
<dbReference type="Proteomes" id="UP000000998">
    <property type="component" value="Chromosome"/>
</dbReference>
<dbReference type="GO" id="GO:0003677">
    <property type="term" value="F:DNA binding"/>
    <property type="evidence" value="ECO:0007669"/>
    <property type="project" value="UniProtKB-UniRule"/>
</dbReference>
<dbReference type="GO" id="GO:0008270">
    <property type="term" value="F:zinc ion binding"/>
    <property type="evidence" value="ECO:0007669"/>
    <property type="project" value="UniProtKB-KW"/>
</dbReference>
<dbReference type="GO" id="GO:0006310">
    <property type="term" value="P:DNA recombination"/>
    <property type="evidence" value="ECO:0007669"/>
    <property type="project" value="UniProtKB-UniRule"/>
</dbReference>
<dbReference type="GO" id="GO:0006281">
    <property type="term" value="P:DNA repair"/>
    <property type="evidence" value="ECO:0007669"/>
    <property type="project" value="UniProtKB-UniRule"/>
</dbReference>
<dbReference type="CDD" id="cd01025">
    <property type="entry name" value="TOPRIM_recR"/>
    <property type="match status" value="1"/>
</dbReference>
<dbReference type="FunFam" id="3.40.1360.10:FF:000001">
    <property type="entry name" value="Recombination protein RecR"/>
    <property type="match status" value="1"/>
</dbReference>
<dbReference type="Gene3D" id="3.40.1360.10">
    <property type="match status" value="1"/>
</dbReference>
<dbReference type="Gene3D" id="6.10.250.240">
    <property type="match status" value="1"/>
</dbReference>
<dbReference type="Gene3D" id="1.10.8.420">
    <property type="entry name" value="RecR Domain 1"/>
    <property type="match status" value="1"/>
</dbReference>
<dbReference type="HAMAP" id="MF_00017">
    <property type="entry name" value="RecR"/>
    <property type="match status" value="1"/>
</dbReference>
<dbReference type="InterPro" id="IPR000093">
    <property type="entry name" value="DNA_Rcmb_RecR"/>
</dbReference>
<dbReference type="InterPro" id="IPR023627">
    <property type="entry name" value="Rcmb_RecR"/>
</dbReference>
<dbReference type="InterPro" id="IPR015967">
    <property type="entry name" value="Rcmb_RecR_Znf"/>
</dbReference>
<dbReference type="InterPro" id="IPR006171">
    <property type="entry name" value="TOPRIM_dom"/>
</dbReference>
<dbReference type="InterPro" id="IPR034137">
    <property type="entry name" value="TOPRIM_RecR"/>
</dbReference>
<dbReference type="NCBIfam" id="TIGR00615">
    <property type="entry name" value="recR"/>
    <property type="match status" value="1"/>
</dbReference>
<dbReference type="PANTHER" id="PTHR30446">
    <property type="entry name" value="RECOMBINATION PROTEIN RECR"/>
    <property type="match status" value="1"/>
</dbReference>
<dbReference type="PANTHER" id="PTHR30446:SF0">
    <property type="entry name" value="RECOMBINATION PROTEIN RECR"/>
    <property type="match status" value="1"/>
</dbReference>
<dbReference type="Pfam" id="PF21175">
    <property type="entry name" value="RecR_C"/>
    <property type="match status" value="1"/>
</dbReference>
<dbReference type="Pfam" id="PF21176">
    <property type="entry name" value="RecR_HhH"/>
    <property type="match status" value="1"/>
</dbReference>
<dbReference type="Pfam" id="PF02132">
    <property type="entry name" value="RecR_ZnF"/>
    <property type="match status" value="1"/>
</dbReference>
<dbReference type="Pfam" id="PF13662">
    <property type="entry name" value="Toprim_4"/>
    <property type="match status" value="1"/>
</dbReference>
<dbReference type="SMART" id="SM00493">
    <property type="entry name" value="TOPRIM"/>
    <property type="match status" value="1"/>
</dbReference>
<dbReference type="SUPFAM" id="SSF111304">
    <property type="entry name" value="Recombination protein RecR"/>
    <property type="match status" value="1"/>
</dbReference>
<dbReference type="PROSITE" id="PS50880">
    <property type="entry name" value="TOPRIM"/>
    <property type="match status" value="1"/>
</dbReference>
<name>RECR_MARN8</name>
<feature type="chain" id="PRO_1000001564" description="Recombination protein RecR">
    <location>
        <begin position="1"/>
        <end position="200"/>
    </location>
</feature>
<feature type="domain" description="Toprim" evidence="1">
    <location>
        <begin position="80"/>
        <end position="175"/>
    </location>
</feature>
<feature type="zinc finger region" description="C4-type" evidence="1">
    <location>
        <begin position="57"/>
        <end position="72"/>
    </location>
</feature>